<gene>
    <name evidence="5" type="primary">CRYD</name>
    <name evidence="5" type="synonym">CRY3</name>
    <name evidence="6" type="ordered locus">Solyc08g074270</name>
</gene>
<keyword id="KW-0150">Chloroplast</keyword>
<keyword id="KW-0157">Chromophore</keyword>
<keyword id="KW-0238">DNA-binding</keyword>
<keyword id="KW-0274">FAD</keyword>
<keyword id="KW-0285">Flavoprotein</keyword>
<keyword id="KW-0496">Mitochondrion</keyword>
<keyword id="KW-0934">Plastid</keyword>
<keyword id="KW-1185">Reference proteome</keyword>
<keyword id="KW-0809">Transit peptide</keyword>
<proteinExistence type="evidence at transcript level"/>
<protein>
    <recommendedName>
        <fullName evidence="5">Cryptochrome DASH, chloroplastic/mitochondrial</fullName>
    </recommendedName>
    <alternativeName>
        <fullName evidence="5">Cryptochrome-3</fullName>
    </alternativeName>
    <alternativeName>
        <fullName evidence="5">Protein CRY-DASH</fullName>
    </alternativeName>
</protein>
<accession>Q38JU2</accession>
<evidence type="ECO:0000250" key="1">
    <source>
        <dbReference type="UniProtKB" id="Q84KJ5"/>
    </source>
</evidence>
<evidence type="ECO:0000255" key="2"/>
<evidence type="ECO:0000256" key="3">
    <source>
        <dbReference type="SAM" id="MobiDB-lite"/>
    </source>
</evidence>
<evidence type="ECO:0000269" key="4">
    <source>
    </source>
</evidence>
<evidence type="ECO:0000303" key="5">
    <source>
    </source>
</evidence>
<evidence type="ECO:0000305" key="6"/>
<evidence type="ECO:0000305" key="7">
    <source>
    </source>
</evidence>
<sequence length="577" mass="66011">MIKQPFLLTKFTPFSSKSKHTLFTFHCNFSIKMASLTARTTPTVQNVPGLTPEEMERVCEQTFQRYESGGLGKRKGKGVAIVWFRNDLRVLDNEALLRAWVSSEAILPVYCVDPRLFGTTHYFGMPKTGALRAQFIIECLNDLKRNLVKRGLDLLIQHGKPEDIVPSLAKAYKAHTVYAHKETCSEEVKVEKMVTRNLQKLVSPSSGGIGNDPGSGNTTKLELVWGSTMYHIDDLPFDCESLPDVYTQFRKSVEYKSKVRNCTKLPTSFGPPPEVGDWGHVPQVSELGLQQEKVSKGMNFVGGESAALGRVHDYFWKKDLLKVYKETRNGMLGADYSTKFSPWLASGSLSPRFIYEEVKRYEKERLSNDSTYWVLFELIWRDYFRFLSIKLANLLFQAGGPQKVNINWSQDQTMFDAWRRGQTGYPLIDANMKELAATGYMSNRGRQIVCSFLVRDMGIDWRMGAEWFETCLLDYDPCSNYGNWTYGAGVGNDPREDRYFSIPKQAQNYDPEGEFVAYWLPELRALPREKRHSPGMMYLNPIVALKHGYTKKTGDSKTAFSSRRGRPEDNRRKRHGY</sequence>
<reference key="1">
    <citation type="journal article" date="2006" name="FEBS Lett.">
        <title>CRY-DASH gene expression is under the control of the circadian clock machinery in tomato.</title>
        <authorList>
            <person name="Facella P."/>
            <person name="Lopez L."/>
            <person name="Chiappetta A."/>
            <person name="Bitonti M.B."/>
            <person name="Giuliano G."/>
            <person name="Perrotta G."/>
        </authorList>
    </citation>
    <scope>NUCLEOTIDE SEQUENCE [GENOMIC DNA]</scope>
    <scope>TISSUE SPECIFICITY</scope>
    <scope>INDUCTION BY LIGHT</scope>
    <source>
        <strain>cv. Moneymaker</strain>
    </source>
</reference>
<reference key="2">
    <citation type="journal article" date="2012" name="Nature">
        <title>The tomato genome sequence provides insights into fleshy fruit evolution.</title>
        <authorList>
            <consortium name="Tomato Genome Consortium"/>
        </authorList>
    </citation>
    <scope>NUCLEOTIDE SEQUENCE [LARGE SCALE GENOMIC DNA]</scope>
    <source>
        <strain>cv. Heinz 1706</strain>
    </source>
</reference>
<organism>
    <name type="scientific">Solanum lycopersicum</name>
    <name type="common">Tomato</name>
    <name type="synonym">Lycopersicon esculentum</name>
    <dbReference type="NCBI Taxonomy" id="4081"/>
    <lineage>
        <taxon>Eukaryota</taxon>
        <taxon>Viridiplantae</taxon>
        <taxon>Streptophyta</taxon>
        <taxon>Embryophyta</taxon>
        <taxon>Tracheophyta</taxon>
        <taxon>Spermatophyta</taxon>
        <taxon>Magnoliopsida</taxon>
        <taxon>eudicotyledons</taxon>
        <taxon>Gunneridae</taxon>
        <taxon>Pentapetalae</taxon>
        <taxon>asterids</taxon>
        <taxon>lamiids</taxon>
        <taxon>Solanales</taxon>
        <taxon>Solanaceae</taxon>
        <taxon>Solanoideae</taxon>
        <taxon>Solaneae</taxon>
        <taxon>Solanum</taxon>
        <taxon>Solanum subgen. Lycopersicon</taxon>
    </lineage>
</organism>
<dbReference type="EMBL" id="DQ222242">
    <property type="protein sequence ID" value="ABB01166.2"/>
    <property type="molecule type" value="Genomic_DNA"/>
</dbReference>
<dbReference type="RefSeq" id="NP_001296304.1">
    <property type="nucleotide sequence ID" value="NM_001309375.1"/>
</dbReference>
<dbReference type="SMR" id="Q38JU2"/>
<dbReference type="FunCoup" id="Q38JU2">
    <property type="interactions" value="48"/>
</dbReference>
<dbReference type="STRING" id="4081.Q38JU2"/>
<dbReference type="PaxDb" id="4081-Solyc08g074270.2.1"/>
<dbReference type="GeneID" id="101248230"/>
<dbReference type="KEGG" id="sly:101248230"/>
<dbReference type="eggNOG" id="KOG0133">
    <property type="taxonomic scope" value="Eukaryota"/>
</dbReference>
<dbReference type="HOGENOM" id="CLU_010348_6_2_1"/>
<dbReference type="InParanoid" id="Q38JU2"/>
<dbReference type="OrthoDB" id="435881at2759"/>
<dbReference type="PhylomeDB" id="Q38JU2"/>
<dbReference type="Proteomes" id="UP000004994">
    <property type="component" value="Unplaced"/>
</dbReference>
<dbReference type="GO" id="GO:0009507">
    <property type="term" value="C:chloroplast"/>
    <property type="evidence" value="ECO:0007669"/>
    <property type="project" value="UniProtKB-SubCell"/>
</dbReference>
<dbReference type="GO" id="GO:0005739">
    <property type="term" value="C:mitochondrion"/>
    <property type="evidence" value="ECO:0007669"/>
    <property type="project" value="UniProtKB-SubCell"/>
</dbReference>
<dbReference type="GO" id="GO:0003904">
    <property type="term" value="F:deoxyribodipyrimidine photo-lyase activity"/>
    <property type="evidence" value="ECO:0000318"/>
    <property type="project" value="GO_Central"/>
</dbReference>
<dbReference type="GO" id="GO:0003677">
    <property type="term" value="F:DNA binding"/>
    <property type="evidence" value="ECO:0000318"/>
    <property type="project" value="GO_Central"/>
</dbReference>
<dbReference type="GO" id="GO:0071949">
    <property type="term" value="F:FAD binding"/>
    <property type="evidence" value="ECO:0000318"/>
    <property type="project" value="GO_Central"/>
</dbReference>
<dbReference type="GO" id="GO:0000719">
    <property type="term" value="P:photoreactive repair"/>
    <property type="evidence" value="ECO:0000318"/>
    <property type="project" value="GO_Central"/>
</dbReference>
<dbReference type="Gene3D" id="1.25.40.80">
    <property type="match status" value="1"/>
</dbReference>
<dbReference type="Gene3D" id="1.10.579.10">
    <property type="entry name" value="DNA Cyclobutane Dipyrimidine Photolyase, subunit A, domain 3"/>
    <property type="match status" value="1"/>
</dbReference>
<dbReference type="Gene3D" id="3.40.50.620">
    <property type="entry name" value="HUPs"/>
    <property type="match status" value="1"/>
</dbReference>
<dbReference type="InterPro" id="IPR014133">
    <property type="entry name" value="Cry_DASH"/>
</dbReference>
<dbReference type="InterPro" id="IPR036134">
    <property type="entry name" value="Crypto/Photolyase_FAD-like_sf"/>
</dbReference>
<dbReference type="InterPro" id="IPR036155">
    <property type="entry name" value="Crypto/Photolyase_N_sf"/>
</dbReference>
<dbReference type="InterPro" id="IPR005101">
    <property type="entry name" value="Cryptochr/Photolyase_FAD-bd"/>
</dbReference>
<dbReference type="InterPro" id="IPR002081">
    <property type="entry name" value="Cryptochrome/DNA_photolyase_1"/>
</dbReference>
<dbReference type="InterPro" id="IPR006050">
    <property type="entry name" value="DNA_photolyase_N"/>
</dbReference>
<dbReference type="InterPro" id="IPR014729">
    <property type="entry name" value="Rossmann-like_a/b/a_fold"/>
</dbReference>
<dbReference type="NCBIfam" id="TIGR02765">
    <property type="entry name" value="crypto_DASH"/>
    <property type="match status" value="1"/>
</dbReference>
<dbReference type="PANTHER" id="PTHR11455">
    <property type="entry name" value="CRYPTOCHROME"/>
    <property type="match status" value="1"/>
</dbReference>
<dbReference type="PANTHER" id="PTHR11455:SF22">
    <property type="entry name" value="CRYPTOCHROME DASH"/>
    <property type="match status" value="1"/>
</dbReference>
<dbReference type="Pfam" id="PF00875">
    <property type="entry name" value="DNA_photolyase"/>
    <property type="match status" value="1"/>
</dbReference>
<dbReference type="Pfam" id="PF03441">
    <property type="entry name" value="FAD_binding_7"/>
    <property type="match status" value="1"/>
</dbReference>
<dbReference type="PRINTS" id="PR00147">
    <property type="entry name" value="DNAPHOTLYASE"/>
</dbReference>
<dbReference type="SUPFAM" id="SSF48173">
    <property type="entry name" value="Cryptochrome/photolyase FAD-binding domain"/>
    <property type="match status" value="1"/>
</dbReference>
<dbReference type="SUPFAM" id="SSF52425">
    <property type="entry name" value="Cryptochrome/photolyase, N-terminal domain"/>
    <property type="match status" value="1"/>
</dbReference>
<dbReference type="PROSITE" id="PS51645">
    <property type="entry name" value="PHR_CRY_ALPHA_BETA"/>
    <property type="match status" value="1"/>
</dbReference>
<name>CRYD_SOLLC</name>
<comment type="function">
    <text evidence="7">May have a photoreceptor function and might bind ss- and ds-DNA in a sequence non-specific manner. Lacks photolyase activity. Has a potential role in detecting the dawn and dusk transitions and, consequently, in circadian input pathways.</text>
</comment>
<comment type="cofactor">
    <cofactor evidence="1">
        <name>FAD</name>
        <dbReference type="ChEBI" id="CHEBI:57692"/>
    </cofactor>
    <text evidence="1">Binds 1 FAD per subunit.</text>
</comment>
<comment type="cofactor">
    <cofactor evidence="1">
        <name>(6R)-5,10-methylene-5,6,7,8-tetrahydrofolate</name>
        <dbReference type="ChEBI" id="CHEBI:15636"/>
    </cofactor>
    <text evidence="1">Binds 1 5,10-methenyltetrahydrofolate (MTHF) per subunit.</text>
</comment>
<comment type="subcellular location">
    <subcellularLocation>
        <location evidence="1">Plastid</location>
        <location evidence="1">Chloroplast</location>
    </subcellularLocation>
    <subcellularLocation>
        <location evidence="1">Mitochondrion</location>
    </subcellularLocation>
</comment>
<comment type="tissue specificity">
    <text evidence="4">Expressed in the endosperm and embryo 96 hours after seed imbibition. In the embryo, detected in the root meristem, the root cap, the shoot apical meristem and the epidermis of cotyledons. In adult plants, detcted in roots, the whole leaf lamina, the stem and in glandular trichomes.</text>
</comment>
<comment type="induction">
    <text evidence="4">Circadian-regulation showing peaks at dawn and at dusk.</text>
</comment>
<comment type="miscellaneous">
    <text evidence="1">5,10-methenyltetrahydrofolate (MTHF) acts as a functional antenna for the photoreduction of FAD.</text>
</comment>
<comment type="similarity">
    <text evidence="6">Belongs to the DNA photolyase class-1 family.</text>
</comment>
<feature type="transit peptide" description="Chloroplast and mitochondrion" evidence="2">
    <location>
        <begin position="1"/>
        <end position="53"/>
    </location>
</feature>
<feature type="chain" id="PRO_0000235319" description="Cryptochrome DASH, chloroplastic/mitochondrial">
    <location>
        <begin position="54"/>
        <end position="577"/>
    </location>
</feature>
<feature type="domain" description="Photolyase/cryptochrome alpha/beta" evidence="2">
    <location>
        <begin position="78"/>
        <end position="219"/>
    </location>
</feature>
<feature type="region of interest" description="Disordered" evidence="3">
    <location>
        <begin position="550"/>
        <end position="577"/>
    </location>
</feature>